<accession>O30602</accession>
<keyword id="KW-1185">Reference proteome</keyword>
<reference key="1">
    <citation type="journal article" date="1998" name="DNA Res.">
        <title>An 8 kb nucleotide sequence at the 3' flanking region of the sspC gene (184 degrees) on the Bacillus subtilis 168 chromosome containing an intein and an intron.</title>
        <authorList>
            <person name="Ghim S.-Y."/>
            <person name="Choi S.-K."/>
            <person name="Shin B.-S."/>
            <person name="Park S.-H."/>
        </authorList>
    </citation>
    <scope>NUCLEOTIDE SEQUENCE [GENOMIC DNA]</scope>
    <source>
        <strain>168</strain>
    </source>
</reference>
<reference key="2">
    <citation type="journal article" date="1997" name="Nature">
        <title>The complete genome sequence of the Gram-positive bacterium Bacillus subtilis.</title>
        <authorList>
            <person name="Kunst F."/>
            <person name="Ogasawara N."/>
            <person name="Moszer I."/>
            <person name="Albertini A.M."/>
            <person name="Alloni G."/>
            <person name="Azevedo V."/>
            <person name="Bertero M.G."/>
            <person name="Bessieres P."/>
            <person name="Bolotin A."/>
            <person name="Borchert S."/>
            <person name="Borriss R."/>
            <person name="Boursier L."/>
            <person name="Brans A."/>
            <person name="Braun M."/>
            <person name="Brignell S.C."/>
            <person name="Bron S."/>
            <person name="Brouillet S."/>
            <person name="Bruschi C.V."/>
            <person name="Caldwell B."/>
            <person name="Capuano V."/>
            <person name="Carter N.M."/>
            <person name="Choi S.-K."/>
            <person name="Codani J.-J."/>
            <person name="Connerton I.F."/>
            <person name="Cummings N.J."/>
            <person name="Daniel R.A."/>
            <person name="Denizot F."/>
            <person name="Devine K.M."/>
            <person name="Duesterhoeft A."/>
            <person name="Ehrlich S.D."/>
            <person name="Emmerson P.T."/>
            <person name="Entian K.-D."/>
            <person name="Errington J."/>
            <person name="Fabret C."/>
            <person name="Ferrari E."/>
            <person name="Foulger D."/>
            <person name="Fritz C."/>
            <person name="Fujita M."/>
            <person name="Fujita Y."/>
            <person name="Fuma S."/>
            <person name="Galizzi A."/>
            <person name="Galleron N."/>
            <person name="Ghim S.-Y."/>
            <person name="Glaser P."/>
            <person name="Goffeau A."/>
            <person name="Golightly E.J."/>
            <person name="Grandi G."/>
            <person name="Guiseppi G."/>
            <person name="Guy B.J."/>
            <person name="Haga K."/>
            <person name="Haiech J."/>
            <person name="Harwood C.R."/>
            <person name="Henaut A."/>
            <person name="Hilbert H."/>
            <person name="Holsappel S."/>
            <person name="Hosono S."/>
            <person name="Hullo M.-F."/>
            <person name="Itaya M."/>
            <person name="Jones L.-M."/>
            <person name="Joris B."/>
            <person name="Karamata D."/>
            <person name="Kasahara Y."/>
            <person name="Klaerr-Blanchard M."/>
            <person name="Klein C."/>
            <person name="Kobayashi Y."/>
            <person name="Koetter P."/>
            <person name="Koningstein G."/>
            <person name="Krogh S."/>
            <person name="Kumano M."/>
            <person name="Kurita K."/>
            <person name="Lapidus A."/>
            <person name="Lardinois S."/>
            <person name="Lauber J."/>
            <person name="Lazarevic V."/>
            <person name="Lee S.-M."/>
            <person name="Levine A."/>
            <person name="Liu H."/>
            <person name="Masuda S."/>
            <person name="Mauel C."/>
            <person name="Medigue C."/>
            <person name="Medina N."/>
            <person name="Mellado R.P."/>
            <person name="Mizuno M."/>
            <person name="Moestl D."/>
            <person name="Nakai S."/>
            <person name="Noback M."/>
            <person name="Noone D."/>
            <person name="O'Reilly M."/>
            <person name="Ogawa K."/>
            <person name="Ogiwara A."/>
            <person name="Oudega B."/>
            <person name="Park S.-H."/>
            <person name="Parro V."/>
            <person name="Pohl T.M."/>
            <person name="Portetelle D."/>
            <person name="Porwollik S."/>
            <person name="Prescott A.M."/>
            <person name="Presecan E."/>
            <person name="Pujic P."/>
            <person name="Purnelle B."/>
            <person name="Rapoport G."/>
            <person name="Rey M."/>
            <person name="Reynolds S."/>
            <person name="Rieger M."/>
            <person name="Rivolta C."/>
            <person name="Rocha E."/>
            <person name="Roche B."/>
            <person name="Rose M."/>
            <person name="Sadaie Y."/>
            <person name="Sato T."/>
            <person name="Scanlan E."/>
            <person name="Schleich S."/>
            <person name="Schroeter R."/>
            <person name="Scoffone F."/>
            <person name="Sekiguchi J."/>
            <person name="Sekowska A."/>
            <person name="Seror S.J."/>
            <person name="Serror P."/>
            <person name="Shin B.-S."/>
            <person name="Soldo B."/>
            <person name="Sorokin A."/>
            <person name="Tacconi E."/>
            <person name="Takagi T."/>
            <person name="Takahashi H."/>
            <person name="Takemaru K."/>
            <person name="Takeuchi M."/>
            <person name="Tamakoshi A."/>
            <person name="Tanaka T."/>
            <person name="Terpstra P."/>
            <person name="Tognoni A."/>
            <person name="Tosato V."/>
            <person name="Uchiyama S."/>
            <person name="Vandenbol M."/>
            <person name="Vannier F."/>
            <person name="Vassarotti A."/>
            <person name="Viari A."/>
            <person name="Wambutt R."/>
            <person name="Wedler E."/>
            <person name="Wedler H."/>
            <person name="Weitzenegger T."/>
            <person name="Winters P."/>
            <person name="Wipat A."/>
            <person name="Yamamoto H."/>
            <person name="Yamane K."/>
            <person name="Yasumoto K."/>
            <person name="Yata K."/>
            <person name="Yoshida K."/>
            <person name="Yoshikawa H.-F."/>
            <person name="Zumstein E."/>
            <person name="Yoshikawa H."/>
            <person name="Danchin A."/>
        </authorList>
    </citation>
    <scope>NUCLEOTIDE SEQUENCE [LARGE SCALE GENOMIC DNA]</scope>
    <source>
        <strain>168</strain>
    </source>
</reference>
<sequence>MLYRNGLCFGFLQLQGLEDEFIEHMRQVAEYEKDLRYKKAAANFMKMHDQNWVGD</sequence>
<protein>
    <recommendedName>
        <fullName>Uncharacterized protein YojW</fullName>
    </recommendedName>
</protein>
<feature type="chain" id="PRO_0000379102" description="Uncharacterized protein YojW">
    <location>
        <begin position="1"/>
        <end position="55"/>
    </location>
</feature>
<dbReference type="EMBL" id="AF012906">
    <property type="protein sequence ID" value="AAB92490.1"/>
    <property type="molecule type" value="Genomic_DNA"/>
</dbReference>
<dbReference type="EMBL" id="AL009126">
    <property type="protein sequence ID" value="CAX52644.1"/>
    <property type="molecule type" value="Genomic_DNA"/>
</dbReference>
<dbReference type="RefSeq" id="WP_004399585.1">
    <property type="nucleotide sequence ID" value="NZ_OZ025638.1"/>
</dbReference>
<dbReference type="RefSeq" id="YP_003097747.1">
    <property type="nucleotide sequence ID" value="NC_000964.3"/>
</dbReference>
<dbReference type="SMR" id="O30602"/>
<dbReference type="FunCoup" id="O30602">
    <property type="interactions" value="27"/>
</dbReference>
<dbReference type="STRING" id="224308.BSU19999"/>
<dbReference type="PaxDb" id="224308-BSU19999"/>
<dbReference type="EnsemblBacteria" id="CAX52644">
    <property type="protein sequence ID" value="CAX52644"/>
    <property type="gene ID" value="BSU_19999"/>
</dbReference>
<dbReference type="GeneID" id="8302977"/>
<dbReference type="KEGG" id="bsu:BSU19999"/>
<dbReference type="PATRIC" id="fig|224308.179.peg.2187"/>
<dbReference type="InParanoid" id="O30602"/>
<dbReference type="OrthoDB" id="2932786at2"/>
<dbReference type="BioCyc" id="BSUB:BSU19999-MONOMER"/>
<dbReference type="Proteomes" id="UP000001570">
    <property type="component" value="Chromosome"/>
</dbReference>
<proteinExistence type="predicted"/>
<organism>
    <name type="scientific">Bacillus subtilis (strain 168)</name>
    <dbReference type="NCBI Taxonomy" id="224308"/>
    <lineage>
        <taxon>Bacteria</taxon>
        <taxon>Bacillati</taxon>
        <taxon>Bacillota</taxon>
        <taxon>Bacilli</taxon>
        <taxon>Bacillales</taxon>
        <taxon>Bacillaceae</taxon>
        <taxon>Bacillus</taxon>
    </lineage>
</organism>
<gene>
    <name type="primary">yojW</name>
    <name type="ordered locus">BSU19999</name>
</gene>
<name>YOJW_BACSU</name>